<name>CADH2_ARATH</name>
<dbReference type="EC" id="1.1.1.195" evidence="2"/>
<dbReference type="EMBL" id="AY302077">
    <property type="protein sequence ID" value="AAP59430.1"/>
    <property type="molecule type" value="mRNA"/>
</dbReference>
<dbReference type="EMBL" id="AC007019">
    <property type="protein sequence ID" value="AAD20393.1"/>
    <property type="molecule type" value="Genomic_DNA"/>
</dbReference>
<dbReference type="EMBL" id="CP002685">
    <property type="protein sequence ID" value="AEC07217.1"/>
    <property type="molecule type" value="Genomic_DNA"/>
</dbReference>
<dbReference type="PIR" id="E84604">
    <property type="entry name" value="E84604"/>
</dbReference>
<dbReference type="RefSeq" id="NP_179765.1">
    <property type="nucleotide sequence ID" value="NM_127743.4"/>
</dbReference>
<dbReference type="SMR" id="Q9SJ25"/>
<dbReference type="FunCoup" id="Q9SJ25">
    <property type="interactions" value="140"/>
</dbReference>
<dbReference type="STRING" id="3702.Q9SJ25"/>
<dbReference type="PaxDb" id="3702-AT2G21730.1"/>
<dbReference type="ProteomicsDB" id="223863"/>
<dbReference type="EnsemblPlants" id="AT2G21730.1">
    <property type="protein sequence ID" value="AT2G21730.1"/>
    <property type="gene ID" value="AT2G21730"/>
</dbReference>
<dbReference type="GeneID" id="816710"/>
<dbReference type="Gramene" id="AT2G21730.1">
    <property type="protein sequence ID" value="AT2G21730.1"/>
    <property type="gene ID" value="AT2G21730"/>
</dbReference>
<dbReference type="KEGG" id="ath:AT2G21730"/>
<dbReference type="Araport" id="AT2G21730"/>
<dbReference type="TAIR" id="AT2G21730">
    <property type="gene designation" value="CAD2"/>
</dbReference>
<dbReference type="eggNOG" id="KOG0023">
    <property type="taxonomic scope" value="Eukaryota"/>
</dbReference>
<dbReference type="HOGENOM" id="CLU_026673_20_2_1"/>
<dbReference type="InParanoid" id="Q9SJ25"/>
<dbReference type="OMA" id="RNKAFGW"/>
<dbReference type="PhylomeDB" id="Q9SJ25"/>
<dbReference type="BioCyc" id="ARA:AT2G21730-MONOMER"/>
<dbReference type="SABIO-RK" id="Q9SJ25"/>
<dbReference type="UniPathway" id="UPA00711"/>
<dbReference type="PRO" id="PR:Q9SJ25"/>
<dbReference type="Proteomes" id="UP000006548">
    <property type="component" value="Chromosome 2"/>
</dbReference>
<dbReference type="ExpressionAtlas" id="Q9SJ25">
    <property type="expression patterns" value="baseline and differential"/>
</dbReference>
<dbReference type="GO" id="GO:0045551">
    <property type="term" value="F:cinnamyl-alcohol dehydrogenase activity"/>
    <property type="evidence" value="ECO:0000314"/>
    <property type="project" value="UniProtKB"/>
</dbReference>
<dbReference type="GO" id="GO:0050268">
    <property type="term" value="F:coniferyl-alcohol dehydrogenase activity"/>
    <property type="evidence" value="ECO:0007669"/>
    <property type="project" value="RHEA"/>
</dbReference>
<dbReference type="GO" id="GO:0008270">
    <property type="term" value="F:zinc ion binding"/>
    <property type="evidence" value="ECO:0007669"/>
    <property type="project" value="InterPro"/>
</dbReference>
<dbReference type="GO" id="GO:0009809">
    <property type="term" value="P:lignin biosynthetic process"/>
    <property type="evidence" value="ECO:0000305"/>
    <property type="project" value="UniProtKB"/>
</dbReference>
<dbReference type="CDD" id="cd05283">
    <property type="entry name" value="CAD1"/>
    <property type="match status" value="1"/>
</dbReference>
<dbReference type="FunFam" id="3.40.50.720:FF:000022">
    <property type="entry name" value="Cinnamyl alcohol dehydrogenase"/>
    <property type="match status" value="1"/>
</dbReference>
<dbReference type="FunFam" id="3.90.180.10:FF:000004">
    <property type="entry name" value="probable cinnamyl alcohol dehydrogenase"/>
    <property type="match status" value="1"/>
</dbReference>
<dbReference type="Gene3D" id="3.90.180.10">
    <property type="entry name" value="Medium-chain alcohol dehydrogenases, catalytic domain"/>
    <property type="match status" value="1"/>
</dbReference>
<dbReference type="Gene3D" id="3.40.50.720">
    <property type="entry name" value="NAD(P)-binding Rossmann-like Domain"/>
    <property type="match status" value="1"/>
</dbReference>
<dbReference type="InterPro" id="IPR013149">
    <property type="entry name" value="ADH-like_C"/>
</dbReference>
<dbReference type="InterPro" id="IPR013154">
    <property type="entry name" value="ADH-like_N"/>
</dbReference>
<dbReference type="InterPro" id="IPR002328">
    <property type="entry name" value="ADH_Zn_CS"/>
</dbReference>
<dbReference type="InterPro" id="IPR047109">
    <property type="entry name" value="CAD-like"/>
</dbReference>
<dbReference type="InterPro" id="IPR011032">
    <property type="entry name" value="GroES-like_sf"/>
</dbReference>
<dbReference type="InterPro" id="IPR036291">
    <property type="entry name" value="NAD(P)-bd_dom_sf"/>
</dbReference>
<dbReference type="InterPro" id="IPR020843">
    <property type="entry name" value="PKS_ER"/>
</dbReference>
<dbReference type="PANTHER" id="PTHR42683">
    <property type="entry name" value="ALDEHYDE REDUCTASE"/>
    <property type="match status" value="1"/>
</dbReference>
<dbReference type="Pfam" id="PF08240">
    <property type="entry name" value="ADH_N"/>
    <property type="match status" value="1"/>
</dbReference>
<dbReference type="Pfam" id="PF00107">
    <property type="entry name" value="ADH_zinc_N"/>
    <property type="match status" value="1"/>
</dbReference>
<dbReference type="SMART" id="SM00829">
    <property type="entry name" value="PKS_ER"/>
    <property type="match status" value="1"/>
</dbReference>
<dbReference type="SUPFAM" id="SSF50129">
    <property type="entry name" value="GroES-like"/>
    <property type="match status" value="1"/>
</dbReference>
<dbReference type="SUPFAM" id="SSF51735">
    <property type="entry name" value="NAD(P)-binding Rossmann-fold domains"/>
    <property type="match status" value="1"/>
</dbReference>
<dbReference type="PROSITE" id="PS00059">
    <property type="entry name" value="ADH_ZINC"/>
    <property type="match status" value="1"/>
</dbReference>
<protein>
    <recommendedName>
        <fullName evidence="5">Cinnamyl alcohol dehydrogenase 2</fullName>
        <shortName evidence="5">AtCAD2</shortName>
        <ecNumber evidence="2">1.1.1.195</ecNumber>
    </recommendedName>
</protein>
<comment type="function">
    <text evidence="2">Involved in lignin biosynthesis. Catalyzes the final step specific for the production of lignin monomers. Catalyzes the NADPH-dependent reduction of coniferaldehyde, 5-hydroxyconiferaldehyde, sinapaldehyde, 4-coumaraldehyde and caffeyl aldehyde to their respective alcohols.</text>
</comment>
<comment type="catalytic activity">
    <reaction evidence="2">
        <text>(E)-cinnamyl alcohol + NADP(+) = (E)-cinnamaldehyde + NADPH + H(+)</text>
        <dbReference type="Rhea" id="RHEA:10392"/>
        <dbReference type="ChEBI" id="CHEBI:15378"/>
        <dbReference type="ChEBI" id="CHEBI:16731"/>
        <dbReference type="ChEBI" id="CHEBI:33227"/>
        <dbReference type="ChEBI" id="CHEBI:57783"/>
        <dbReference type="ChEBI" id="CHEBI:58349"/>
        <dbReference type="EC" id="1.1.1.195"/>
    </reaction>
    <physiologicalReaction direction="right-to-left" evidence="2">
        <dbReference type="Rhea" id="RHEA:10394"/>
    </physiologicalReaction>
</comment>
<comment type="catalytic activity">
    <reaction evidence="2">
        <text>(E)-coniferol + NADP(+) = (E)-coniferaldehyde + NADPH + H(+)</text>
        <dbReference type="Rhea" id="RHEA:22444"/>
        <dbReference type="ChEBI" id="CHEBI:15378"/>
        <dbReference type="ChEBI" id="CHEBI:16547"/>
        <dbReference type="ChEBI" id="CHEBI:17745"/>
        <dbReference type="ChEBI" id="CHEBI:57783"/>
        <dbReference type="ChEBI" id="CHEBI:58349"/>
        <dbReference type="EC" id="1.1.1.195"/>
    </reaction>
    <physiologicalReaction direction="right-to-left" evidence="2">
        <dbReference type="Rhea" id="RHEA:22446"/>
    </physiologicalReaction>
</comment>
<comment type="catalytic activity">
    <reaction evidence="2">
        <text>(E)-sinapyl alcohol + NADP(+) = (E)-sinapaldehyde + NADPH + H(+)</text>
        <dbReference type="Rhea" id="RHEA:45704"/>
        <dbReference type="ChEBI" id="CHEBI:15378"/>
        <dbReference type="ChEBI" id="CHEBI:27949"/>
        <dbReference type="ChEBI" id="CHEBI:57783"/>
        <dbReference type="ChEBI" id="CHEBI:58349"/>
        <dbReference type="ChEBI" id="CHEBI:64557"/>
        <dbReference type="EC" id="1.1.1.195"/>
    </reaction>
    <physiologicalReaction direction="right-to-left" evidence="2">
        <dbReference type="Rhea" id="RHEA:45706"/>
    </physiologicalReaction>
</comment>
<comment type="catalytic activity">
    <reaction evidence="2">
        <text>(E)-4-coumaroyl alcohol + NADP(+) = (E)-4-coumaraldehyde + NADPH + H(+)</text>
        <dbReference type="Rhea" id="RHEA:45724"/>
        <dbReference type="ChEBI" id="CHEBI:15378"/>
        <dbReference type="ChEBI" id="CHEBI:28353"/>
        <dbReference type="ChEBI" id="CHEBI:57783"/>
        <dbReference type="ChEBI" id="CHEBI:58349"/>
        <dbReference type="ChEBI" id="CHEBI:64555"/>
        <dbReference type="EC" id="1.1.1.195"/>
    </reaction>
    <physiologicalReaction direction="right-to-left" evidence="2">
        <dbReference type="Rhea" id="RHEA:45726"/>
    </physiologicalReaction>
</comment>
<comment type="catalytic activity">
    <reaction evidence="2">
        <text>(E)-caffeyl alcohol + NADP(+) = (E)-caffeyl aldehyde + NADPH + H(+)</text>
        <dbReference type="Rhea" id="RHEA:45728"/>
        <dbReference type="ChEBI" id="CHEBI:15378"/>
        <dbReference type="ChEBI" id="CHEBI:28323"/>
        <dbReference type="ChEBI" id="CHEBI:31334"/>
        <dbReference type="ChEBI" id="CHEBI:57783"/>
        <dbReference type="ChEBI" id="CHEBI:58349"/>
    </reaction>
    <physiologicalReaction direction="right-to-left" evidence="2">
        <dbReference type="Rhea" id="RHEA:45730"/>
    </physiologicalReaction>
</comment>
<comment type="cofactor">
    <cofactor evidence="1">
        <name>Zn(2+)</name>
        <dbReference type="ChEBI" id="CHEBI:29105"/>
    </cofactor>
    <text evidence="1">Binds 2 Zn(2+) ions per subunit.</text>
</comment>
<comment type="biophysicochemical properties">
    <kinetics>
        <KM evidence="2">114 uM for 4-coumaraldehyde (at pH 6.5 and 40 degrees Celsius)</KM>
        <KM evidence="2">161 uM for caffeyl aldehyde (at pH 6.25-6.5 and 40 degrees Celsius)</KM>
        <KM evidence="2">452 uM for coniferaldehyde (at pH 6.5 and 40 degrees Celsius)</KM>
        <KM evidence="2">336 uM for 5-hydroxyconiferaldehyde (at pH 6.5 and 37 degrees Celsius)</KM>
        <KM evidence="2">2161 uM for sinapaldehyde (at pH 6.5 and 40 degrees Celsius)</KM>
        <Vmax evidence="2">3.3 pmol/sec/ug enzyme with 4-coumaraldehyde as substrate (at pH 6.5 and 40 degrees Celsius)</Vmax>
        <Vmax evidence="2">22.2 pmol/sec/ug enzyme with caffeyl aldehyde as substrate (at pH 6.25-6.5 and 40 degrees Celsius)</Vmax>
        <Vmax evidence="2">8.0 pmol/sec/ug enzyme with coniferaldehyde as substrate (at pH 6.5 and 40 degrees Celsius)</Vmax>
        <Vmax evidence="2">16.4 pmol/sec/ug enzyme with 5-hydroxyconiferaldehyde as substrate (at pH 6.5 and 37 degrees Celsius)</Vmax>
        <Vmax evidence="2">48.1 pmol/sec/ug enzyme with sinapaldehyde as substrate (at pH 6.5 and 40 degrees Celsius)</Vmax>
    </kinetics>
</comment>
<comment type="pathway">
    <text evidence="7">Aromatic compound metabolism; phenylpropanoid biosynthesis.</text>
</comment>
<comment type="subunit">
    <text evidence="1">Homodimer.</text>
</comment>
<comment type="tissue specificity">
    <text evidence="3 4">Expressed at the base of the stems.</text>
</comment>
<comment type="similarity">
    <text evidence="7">Belongs to the zinc-containing alcohol dehydrogenase family.</text>
</comment>
<evidence type="ECO:0000250" key="1">
    <source>
        <dbReference type="UniProtKB" id="O49482"/>
    </source>
</evidence>
<evidence type="ECO:0000269" key="2">
    <source>
    </source>
</evidence>
<evidence type="ECO:0000269" key="3">
    <source>
    </source>
</evidence>
<evidence type="ECO:0000269" key="4">
    <source>
    </source>
</evidence>
<evidence type="ECO:0000303" key="5">
    <source>
    </source>
</evidence>
<evidence type="ECO:0000303" key="6">
    <source>
    </source>
</evidence>
<evidence type="ECO:0000305" key="7"/>
<evidence type="ECO:0000312" key="8">
    <source>
        <dbReference type="Araport" id="AT2G21730"/>
    </source>
</evidence>
<evidence type="ECO:0000312" key="9">
    <source>
        <dbReference type="EMBL" id="AAD20393.1"/>
    </source>
</evidence>
<feature type="chain" id="PRO_0000382637" description="Cinnamyl alcohol dehydrogenase 2">
    <location>
        <begin position="1"/>
        <end position="376"/>
    </location>
</feature>
<feature type="binding site" evidence="1">
    <location>
        <position position="44"/>
    </location>
    <ligand>
        <name>Zn(2+)</name>
        <dbReference type="ChEBI" id="CHEBI:29105"/>
        <label>1</label>
        <note>catalytic</note>
    </ligand>
</feature>
<feature type="binding site" evidence="1">
    <location>
        <position position="46"/>
    </location>
    <ligand>
        <name>NADP(+)</name>
        <dbReference type="ChEBI" id="CHEBI:58349"/>
    </ligand>
</feature>
<feature type="binding site" evidence="1">
    <location>
        <position position="66"/>
    </location>
    <ligand>
        <name>Zn(2+)</name>
        <dbReference type="ChEBI" id="CHEBI:29105"/>
        <label>1</label>
        <note>catalytic</note>
    </ligand>
</feature>
<feature type="binding site" evidence="1">
    <location>
        <position position="67"/>
    </location>
    <ligand>
        <name>Zn(2+)</name>
        <dbReference type="ChEBI" id="CHEBI:29105"/>
        <label>1</label>
        <note>catalytic</note>
    </ligand>
</feature>
<feature type="binding site" evidence="1">
    <location>
        <position position="97"/>
    </location>
    <ligand>
        <name>Zn(2+)</name>
        <dbReference type="ChEBI" id="CHEBI:29105"/>
        <label>2</label>
    </ligand>
</feature>
<feature type="binding site" evidence="1">
    <location>
        <position position="100"/>
    </location>
    <ligand>
        <name>Zn(2+)</name>
        <dbReference type="ChEBI" id="CHEBI:29105"/>
        <label>2</label>
    </ligand>
</feature>
<feature type="binding site" evidence="1">
    <location>
        <position position="103"/>
    </location>
    <ligand>
        <name>Zn(2+)</name>
        <dbReference type="ChEBI" id="CHEBI:29105"/>
        <label>2</label>
    </ligand>
</feature>
<feature type="binding site" evidence="1">
    <location>
        <position position="111"/>
    </location>
    <ligand>
        <name>Zn(2+)</name>
        <dbReference type="ChEBI" id="CHEBI:29105"/>
        <label>2</label>
    </ligand>
</feature>
<feature type="binding site" evidence="1">
    <location>
        <position position="161"/>
    </location>
    <ligand>
        <name>Zn(2+)</name>
        <dbReference type="ChEBI" id="CHEBI:29105"/>
        <label>1</label>
        <note>catalytic</note>
    </ligand>
</feature>
<feature type="binding site" evidence="1">
    <location>
        <position position="165"/>
    </location>
    <ligand>
        <name>NADP(+)</name>
        <dbReference type="ChEBI" id="CHEBI:58349"/>
    </ligand>
</feature>
<feature type="binding site" evidence="1">
    <location>
        <begin position="187"/>
        <end position="192"/>
    </location>
    <ligand>
        <name>NADP(+)</name>
        <dbReference type="ChEBI" id="CHEBI:58349"/>
    </ligand>
</feature>
<feature type="binding site" evidence="1">
    <location>
        <begin position="210"/>
        <end position="215"/>
    </location>
    <ligand>
        <name>NADP(+)</name>
        <dbReference type="ChEBI" id="CHEBI:58349"/>
    </ligand>
</feature>
<feature type="binding site" evidence="1">
    <location>
        <position position="250"/>
    </location>
    <ligand>
        <name>NADP(+)</name>
        <dbReference type="ChEBI" id="CHEBI:58349"/>
    </ligand>
</feature>
<feature type="binding site" evidence="1">
    <location>
        <position position="274"/>
    </location>
    <ligand>
        <name>NADP(+)</name>
        <dbReference type="ChEBI" id="CHEBI:58349"/>
    </ligand>
</feature>
<feature type="binding site" evidence="1">
    <location>
        <begin position="297"/>
        <end position="299"/>
    </location>
    <ligand>
        <name>NADP(+)</name>
        <dbReference type="ChEBI" id="CHEBI:58349"/>
    </ligand>
</feature>
<organism>
    <name type="scientific">Arabidopsis thaliana</name>
    <name type="common">Mouse-ear cress</name>
    <dbReference type="NCBI Taxonomy" id="3702"/>
    <lineage>
        <taxon>Eukaryota</taxon>
        <taxon>Viridiplantae</taxon>
        <taxon>Streptophyta</taxon>
        <taxon>Embryophyta</taxon>
        <taxon>Tracheophyta</taxon>
        <taxon>Spermatophyta</taxon>
        <taxon>Magnoliopsida</taxon>
        <taxon>eudicotyledons</taxon>
        <taxon>Gunneridae</taxon>
        <taxon>Pentapetalae</taxon>
        <taxon>rosids</taxon>
        <taxon>malvids</taxon>
        <taxon>Brassicales</taxon>
        <taxon>Brassicaceae</taxon>
        <taxon>Camelineae</taxon>
        <taxon>Arabidopsis</taxon>
    </lineage>
</organism>
<keyword id="KW-0438">Lignin biosynthesis</keyword>
<keyword id="KW-0479">Metal-binding</keyword>
<keyword id="KW-0521">NADP</keyword>
<keyword id="KW-0560">Oxidoreductase</keyword>
<keyword id="KW-1185">Reference proteome</keyword>
<keyword id="KW-0862">Zinc</keyword>
<sequence length="376" mass="40909">MVDQNKAFGWAANDESGVLSPFHFSRRENGENDVTVKILFCGVCHSDLHTIKNHWGFSRYPIIPGHEIVGIATKVGKNVTKFKEGDRVGVGVIIGSCQSCESCNQDLENYCPKVVFTYNSRSSDGTSRNQGGYSDVIVVDHRFVLSIPDGLPSDSGAPLLCAGITVYSPMKYYGMTKESGKRLGVNGLGGLGHIAVKIGKAFGLRVTVISRSSEKEREAIDRLGADSFLVTTDSQKMKEAVGTMDFIIDTVSAEHALLPLFSLLKVNGKLVALGLPEKPLDLPIFSLVLGRKMVGGSQIGGMKETQEMLEFCAKHKIVSDIELIKMSDINSAMDRLAKSDVRYRFVIDVANSLLPESSAEILTEQVDHGVSITSRF</sequence>
<gene>
    <name evidence="5" type="primary">CAD2</name>
    <name evidence="7" type="synonym">CAD7</name>
    <name evidence="6" type="synonym">CADE</name>
    <name evidence="7" type="synonym">LCAD-E</name>
    <name evidence="8" type="ordered locus">At2g21730</name>
    <name evidence="9" type="ORF">F7D8.5</name>
</gene>
<accession>Q9SJ25</accession>
<proteinExistence type="evidence at protein level"/>
<reference key="1">
    <citation type="journal article" date="2004" name="Proc. Natl. Acad. Sci. U.S.A.">
        <title>Functional reclassification of the putative cinnamyl alcohol dehydrogenase multigene family in Arabidopsis.</title>
        <authorList>
            <person name="Kim S.-J."/>
            <person name="Kim M.-R."/>
            <person name="Bedgar D.L."/>
            <person name="Moinuddin S.G.A."/>
            <person name="Cardenas C.L."/>
            <person name="Davin L.B."/>
            <person name="Kang C."/>
            <person name="Lewis N.G."/>
        </authorList>
    </citation>
    <scope>NUCLEOTIDE SEQUENCE [MRNA]</scope>
    <scope>FUNCTION</scope>
    <scope>CATALYTIC ACTIVITY</scope>
    <scope>BIOPHYSICOCHEMICAL PROPERTIES</scope>
    <scope>GENE FAMILY</scope>
    <scope>NOMENCLATURE</scope>
</reference>
<reference key="2">
    <citation type="journal article" date="1999" name="Nature">
        <title>Sequence and analysis of chromosome 2 of the plant Arabidopsis thaliana.</title>
        <authorList>
            <person name="Lin X."/>
            <person name="Kaul S."/>
            <person name="Rounsley S.D."/>
            <person name="Shea T.P."/>
            <person name="Benito M.-I."/>
            <person name="Town C.D."/>
            <person name="Fujii C.Y."/>
            <person name="Mason T.M."/>
            <person name="Bowman C.L."/>
            <person name="Barnstead M.E."/>
            <person name="Feldblyum T.V."/>
            <person name="Buell C.R."/>
            <person name="Ketchum K.A."/>
            <person name="Lee J.J."/>
            <person name="Ronning C.M."/>
            <person name="Koo H.L."/>
            <person name="Moffat K.S."/>
            <person name="Cronin L.A."/>
            <person name="Shen M."/>
            <person name="Pai G."/>
            <person name="Van Aken S."/>
            <person name="Umayam L."/>
            <person name="Tallon L.J."/>
            <person name="Gill J.E."/>
            <person name="Adams M.D."/>
            <person name="Carrera A.J."/>
            <person name="Creasy T.H."/>
            <person name="Goodman H.M."/>
            <person name="Somerville C.R."/>
            <person name="Copenhaver G.P."/>
            <person name="Preuss D."/>
            <person name="Nierman W.C."/>
            <person name="White O."/>
            <person name="Eisen J.A."/>
            <person name="Salzberg S.L."/>
            <person name="Fraser C.M."/>
            <person name="Venter J.C."/>
        </authorList>
    </citation>
    <scope>NUCLEOTIDE SEQUENCE [LARGE SCALE GENOMIC DNA]</scope>
    <source>
        <strain>cv. Columbia</strain>
    </source>
</reference>
<reference key="3">
    <citation type="journal article" date="2017" name="Plant J.">
        <title>Araport11: a complete reannotation of the Arabidopsis thaliana reference genome.</title>
        <authorList>
            <person name="Cheng C.Y."/>
            <person name="Krishnakumar V."/>
            <person name="Chan A.P."/>
            <person name="Thibaud-Nissen F."/>
            <person name="Schobel S."/>
            <person name="Town C.D."/>
        </authorList>
    </citation>
    <scope>GENOME REANNOTATION</scope>
    <source>
        <strain>cv. Columbia</strain>
    </source>
</reference>
<reference key="4">
    <citation type="journal article" date="2006" name="Planta">
        <title>Evidence for a role of AtCAD 1 in lignification of elongating stems of Arabidopsis thaliana.</title>
        <authorList>
            <person name="Eudes A."/>
            <person name="Pollet B."/>
            <person name="Sibout R."/>
            <person name="Do C.-T."/>
            <person name="Seguin A."/>
            <person name="Lapierre C."/>
            <person name="Jouanin L."/>
        </authorList>
    </citation>
    <scope>TISSUE SPECIFICITY</scope>
</reference>
<reference key="5">
    <citation type="journal article" date="2007" name="Phytochemistry">
        <title>Expression of cinnamyl alcohol dehydrogenases and their putative homologues during Arabidopsis thaliana growth and development: lessons for database annotations?</title>
        <authorList>
            <person name="Kim S.-J."/>
            <person name="Kim K.-W."/>
            <person name="Cho M.-H."/>
            <person name="Franceschi V.R."/>
            <person name="Davin L.B."/>
            <person name="Lewis N.G."/>
        </authorList>
    </citation>
    <scope>TISSUE SPECIFICITY</scope>
</reference>